<feature type="chain" id="PRO_0000337332" description="Elongation factor Tu">
    <location>
        <begin position="1"/>
        <end position="391"/>
    </location>
</feature>
<feature type="domain" description="tr-type G">
    <location>
        <begin position="10"/>
        <end position="201"/>
    </location>
</feature>
<feature type="region of interest" description="G1" evidence="1">
    <location>
        <begin position="19"/>
        <end position="26"/>
    </location>
</feature>
<feature type="region of interest" description="G2" evidence="1">
    <location>
        <begin position="55"/>
        <end position="59"/>
    </location>
</feature>
<feature type="region of interest" description="G3" evidence="1">
    <location>
        <begin position="76"/>
        <end position="79"/>
    </location>
</feature>
<feature type="region of interest" description="G4" evidence="1">
    <location>
        <begin position="131"/>
        <end position="134"/>
    </location>
</feature>
<feature type="region of interest" description="G5" evidence="1">
    <location>
        <begin position="169"/>
        <end position="171"/>
    </location>
</feature>
<feature type="binding site" evidence="2">
    <location>
        <begin position="19"/>
        <end position="26"/>
    </location>
    <ligand>
        <name>GTP</name>
        <dbReference type="ChEBI" id="CHEBI:37565"/>
    </ligand>
</feature>
<feature type="binding site" evidence="2">
    <location>
        <position position="26"/>
    </location>
    <ligand>
        <name>Mg(2+)</name>
        <dbReference type="ChEBI" id="CHEBI:18420"/>
    </ligand>
</feature>
<feature type="binding site" evidence="2">
    <location>
        <begin position="76"/>
        <end position="80"/>
    </location>
    <ligand>
        <name>GTP</name>
        <dbReference type="ChEBI" id="CHEBI:37565"/>
    </ligand>
</feature>
<feature type="binding site" evidence="2">
    <location>
        <begin position="131"/>
        <end position="134"/>
    </location>
    <ligand>
        <name>GTP</name>
        <dbReference type="ChEBI" id="CHEBI:37565"/>
    </ligand>
</feature>
<keyword id="KW-0963">Cytoplasm</keyword>
<keyword id="KW-0251">Elongation factor</keyword>
<keyword id="KW-0342">GTP-binding</keyword>
<keyword id="KW-0378">Hydrolase</keyword>
<keyword id="KW-0460">Magnesium</keyword>
<keyword id="KW-0479">Metal-binding</keyword>
<keyword id="KW-0547">Nucleotide-binding</keyword>
<keyword id="KW-0648">Protein biosynthesis</keyword>
<sequence length="391" mass="42605">MAKSKFERTKPHVNIGTIGHVDHGKTSLTAAITKFFGEFKAYDQIDAAPEERARGITISTAHVEYETANRHYAHVDCPGHADYVKNMITGAAQMDGAILVVSAADGPMPQTREHILLARQVGVPAIVVFLNKCDQVDDAELLELVELEVRELLSKYEFPGDEIPIIKGSALAALEDSSKELGEDAIRNLMDAVDSYIPTPERPIDQPFLMPIEDVFSISGRGTVVTGRVERGIVKVGEEVEIVGIKATTKTTVTGVEMFRKLLDQGQAGDNIGALIRGVGREDVERGQVLCKPGSVKPHTKFKAEAYILTKDEGGRHTPFFTNYRPQFYFRTTDVTGVVTLPAGTEMVMPGDNVAMDVTLIVPIAMEEKLRFAIREGGRTVGAGIVSSIIE</sequence>
<protein>
    <recommendedName>
        <fullName evidence="2">Elongation factor Tu</fullName>
        <shortName evidence="2">EF-Tu</shortName>
        <ecNumber evidence="2">3.6.5.3</ecNumber>
    </recommendedName>
</protein>
<gene>
    <name evidence="2" type="primary">tuf1</name>
    <name type="ordered locus">BOV_1198</name>
</gene>
<gene>
    <name evidence="2" type="primary">tuf2</name>
    <name type="ordered locus">BOV_1213</name>
</gene>
<reference key="1">
    <citation type="journal article" date="2009" name="PLoS ONE">
        <title>Genome degradation in Brucella ovis corresponds with narrowing of its host range and tissue tropism.</title>
        <authorList>
            <person name="Tsolis R.M."/>
            <person name="Seshadri R."/>
            <person name="Santos R.L."/>
            <person name="Sangari F.J."/>
            <person name="Lobo J.M."/>
            <person name="de Jong M.F."/>
            <person name="Ren Q."/>
            <person name="Myers G."/>
            <person name="Brinkac L.M."/>
            <person name="Nelson W.C."/>
            <person name="Deboy R.T."/>
            <person name="Angiuoli S."/>
            <person name="Khouri H."/>
            <person name="Dimitrov G."/>
            <person name="Robinson J.R."/>
            <person name="Mulligan S."/>
            <person name="Walker R.L."/>
            <person name="Elzer P.E."/>
            <person name="Hassan K.A."/>
            <person name="Paulsen I.T."/>
        </authorList>
    </citation>
    <scope>NUCLEOTIDE SEQUENCE [LARGE SCALE GENOMIC DNA]</scope>
    <source>
        <strain>ATCC 25840 / 63/290 / NCTC 10512</strain>
    </source>
</reference>
<accession>A5VR08</accession>
<organism>
    <name type="scientific">Brucella ovis (strain ATCC 25840 / 63/290 / NCTC 10512)</name>
    <dbReference type="NCBI Taxonomy" id="444178"/>
    <lineage>
        <taxon>Bacteria</taxon>
        <taxon>Pseudomonadati</taxon>
        <taxon>Pseudomonadota</taxon>
        <taxon>Alphaproteobacteria</taxon>
        <taxon>Hyphomicrobiales</taxon>
        <taxon>Brucellaceae</taxon>
        <taxon>Brucella/Ochrobactrum group</taxon>
        <taxon>Brucella</taxon>
    </lineage>
</organism>
<name>EFTU_BRUO2</name>
<comment type="function">
    <text evidence="2">GTP hydrolase that promotes the GTP-dependent binding of aminoacyl-tRNA to the A-site of ribosomes during protein biosynthesis.</text>
</comment>
<comment type="catalytic activity">
    <reaction evidence="2">
        <text>GTP + H2O = GDP + phosphate + H(+)</text>
        <dbReference type="Rhea" id="RHEA:19669"/>
        <dbReference type="ChEBI" id="CHEBI:15377"/>
        <dbReference type="ChEBI" id="CHEBI:15378"/>
        <dbReference type="ChEBI" id="CHEBI:37565"/>
        <dbReference type="ChEBI" id="CHEBI:43474"/>
        <dbReference type="ChEBI" id="CHEBI:58189"/>
        <dbReference type="EC" id="3.6.5.3"/>
    </reaction>
    <physiologicalReaction direction="left-to-right" evidence="2">
        <dbReference type="Rhea" id="RHEA:19670"/>
    </physiologicalReaction>
</comment>
<comment type="subunit">
    <text evidence="2">Monomer.</text>
</comment>
<comment type="subcellular location">
    <subcellularLocation>
        <location evidence="2">Cytoplasm</location>
    </subcellularLocation>
</comment>
<comment type="similarity">
    <text evidence="2">Belongs to the TRAFAC class translation factor GTPase superfamily. Classic translation factor GTPase family. EF-Tu/EF-1A subfamily.</text>
</comment>
<proteinExistence type="inferred from homology"/>
<dbReference type="EC" id="3.6.5.3" evidence="2"/>
<dbReference type="EMBL" id="CP000708">
    <property type="protein sequence ID" value="ABQ60947.1"/>
    <property type="molecule type" value="Genomic_DNA"/>
</dbReference>
<dbReference type="EMBL" id="CP000708">
    <property type="protein sequence ID" value="ABQ61477.1"/>
    <property type="molecule type" value="Genomic_DNA"/>
</dbReference>
<dbReference type="SMR" id="A5VR08"/>
<dbReference type="KEGG" id="bov:BOV_1198"/>
<dbReference type="KEGG" id="bov:BOV_1213"/>
<dbReference type="HOGENOM" id="CLU_007265_0_0_5"/>
<dbReference type="PhylomeDB" id="A5VR08"/>
<dbReference type="Proteomes" id="UP000006383">
    <property type="component" value="Chromosome I"/>
</dbReference>
<dbReference type="GO" id="GO:0005829">
    <property type="term" value="C:cytosol"/>
    <property type="evidence" value="ECO:0007669"/>
    <property type="project" value="TreeGrafter"/>
</dbReference>
<dbReference type="GO" id="GO:0005525">
    <property type="term" value="F:GTP binding"/>
    <property type="evidence" value="ECO:0007669"/>
    <property type="project" value="UniProtKB-UniRule"/>
</dbReference>
<dbReference type="GO" id="GO:0003924">
    <property type="term" value="F:GTPase activity"/>
    <property type="evidence" value="ECO:0007669"/>
    <property type="project" value="InterPro"/>
</dbReference>
<dbReference type="GO" id="GO:0097216">
    <property type="term" value="F:guanosine tetraphosphate binding"/>
    <property type="evidence" value="ECO:0007669"/>
    <property type="project" value="UniProtKB-ARBA"/>
</dbReference>
<dbReference type="GO" id="GO:0003746">
    <property type="term" value="F:translation elongation factor activity"/>
    <property type="evidence" value="ECO:0007669"/>
    <property type="project" value="UniProtKB-UniRule"/>
</dbReference>
<dbReference type="CDD" id="cd01884">
    <property type="entry name" value="EF_Tu"/>
    <property type="match status" value="1"/>
</dbReference>
<dbReference type="CDD" id="cd03697">
    <property type="entry name" value="EFTU_II"/>
    <property type="match status" value="1"/>
</dbReference>
<dbReference type="CDD" id="cd03707">
    <property type="entry name" value="EFTU_III"/>
    <property type="match status" value="1"/>
</dbReference>
<dbReference type="FunFam" id="2.40.30.10:FF:000001">
    <property type="entry name" value="Elongation factor Tu"/>
    <property type="match status" value="1"/>
</dbReference>
<dbReference type="FunFam" id="3.40.50.300:FF:000003">
    <property type="entry name" value="Elongation factor Tu"/>
    <property type="match status" value="1"/>
</dbReference>
<dbReference type="Gene3D" id="3.40.50.300">
    <property type="entry name" value="P-loop containing nucleotide triphosphate hydrolases"/>
    <property type="match status" value="1"/>
</dbReference>
<dbReference type="Gene3D" id="2.40.30.10">
    <property type="entry name" value="Translation factors"/>
    <property type="match status" value="2"/>
</dbReference>
<dbReference type="HAMAP" id="MF_00118_B">
    <property type="entry name" value="EF_Tu_B"/>
    <property type="match status" value="1"/>
</dbReference>
<dbReference type="InterPro" id="IPR041709">
    <property type="entry name" value="EF-Tu_GTP-bd"/>
</dbReference>
<dbReference type="InterPro" id="IPR050055">
    <property type="entry name" value="EF-Tu_GTPase"/>
</dbReference>
<dbReference type="InterPro" id="IPR004161">
    <property type="entry name" value="EFTu-like_2"/>
</dbReference>
<dbReference type="InterPro" id="IPR033720">
    <property type="entry name" value="EFTU_2"/>
</dbReference>
<dbReference type="InterPro" id="IPR031157">
    <property type="entry name" value="G_TR_CS"/>
</dbReference>
<dbReference type="InterPro" id="IPR027417">
    <property type="entry name" value="P-loop_NTPase"/>
</dbReference>
<dbReference type="InterPro" id="IPR005225">
    <property type="entry name" value="Small_GTP-bd"/>
</dbReference>
<dbReference type="InterPro" id="IPR000795">
    <property type="entry name" value="T_Tr_GTP-bd_dom"/>
</dbReference>
<dbReference type="InterPro" id="IPR009000">
    <property type="entry name" value="Transl_B-barrel_sf"/>
</dbReference>
<dbReference type="InterPro" id="IPR009001">
    <property type="entry name" value="Transl_elong_EF1A/Init_IF2_C"/>
</dbReference>
<dbReference type="InterPro" id="IPR004541">
    <property type="entry name" value="Transl_elong_EFTu/EF1A_bac/org"/>
</dbReference>
<dbReference type="InterPro" id="IPR004160">
    <property type="entry name" value="Transl_elong_EFTu/EF1A_C"/>
</dbReference>
<dbReference type="NCBIfam" id="TIGR00485">
    <property type="entry name" value="EF-Tu"/>
    <property type="match status" value="1"/>
</dbReference>
<dbReference type="NCBIfam" id="NF000766">
    <property type="entry name" value="PRK00049.1"/>
    <property type="match status" value="1"/>
</dbReference>
<dbReference type="NCBIfam" id="NF009372">
    <property type="entry name" value="PRK12735.1"/>
    <property type="match status" value="1"/>
</dbReference>
<dbReference type="NCBIfam" id="NF009373">
    <property type="entry name" value="PRK12736.1"/>
    <property type="match status" value="1"/>
</dbReference>
<dbReference type="NCBIfam" id="TIGR00231">
    <property type="entry name" value="small_GTP"/>
    <property type="match status" value="1"/>
</dbReference>
<dbReference type="PANTHER" id="PTHR43721:SF22">
    <property type="entry name" value="ELONGATION FACTOR TU, MITOCHONDRIAL"/>
    <property type="match status" value="1"/>
</dbReference>
<dbReference type="PANTHER" id="PTHR43721">
    <property type="entry name" value="ELONGATION FACTOR TU-RELATED"/>
    <property type="match status" value="1"/>
</dbReference>
<dbReference type="Pfam" id="PF00009">
    <property type="entry name" value="GTP_EFTU"/>
    <property type="match status" value="1"/>
</dbReference>
<dbReference type="Pfam" id="PF03144">
    <property type="entry name" value="GTP_EFTU_D2"/>
    <property type="match status" value="1"/>
</dbReference>
<dbReference type="Pfam" id="PF03143">
    <property type="entry name" value="GTP_EFTU_D3"/>
    <property type="match status" value="1"/>
</dbReference>
<dbReference type="PRINTS" id="PR00315">
    <property type="entry name" value="ELONGATNFCT"/>
</dbReference>
<dbReference type="SUPFAM" id="SSF50465">
    <property type="entry name" value="EF-Tu/eEF-1alpha/eIF2-gamma C-terminal domain"/>
    <property type="match status" value="1"/>
</dbReference>
<dbReference type="SUPFAM" id="SSF52540">
    <property type="entry name" value="P-loop containing nucleoside triphosphate hydrolases"/>
    <property type="match status" value="1"/>
</dbReference>
<dbReference type="SUPFAM" id="SSF50447">
    <property type="entry name" value="Translation proteins"/>
    <property type="match status" value="1"/>
</dbReference>
<dbReference type="PROSITE" id="PS00301">
    <property type="entry name" value="G_TR_1"/>
    <property type="match status" value="1"/>
</dbReference>
<dbReference type="PROSITE" id="PS51722">
    <property type="entry name" value="G_TR_2"/>
    <property type="match status" value="1"/>
</dbReference>
<evidence type="ECO:0000250" key="1"/>
<evidence type="ECO:0000255" key="2">
    <source>
        <dbReference type="HAMAP-Rule" id="MF_00118"/>
    </source>
</evidence>